<name>PER3_DAUCA</name>
<proteinExistence type="evidence at protein level"/>
<accession>P86056</accession>
<organism>
    <name type="scientific">Daucus carota</name>
    <name type="common">Wild carrot</name>
    <dbReference type="NCBI Taxonomy" id="4039"/>
    <lineage>
        <taxon>Eukaryota</taxon>
        <taxon>Viridiplantae</taxon>
        <taxon>Streptophyta</taxon>
        <taxon>Embryophyta</taxon>
        <taxon>Tracheophyta</taxon>
        <taxon>Spermatophyta</taxon>
        <taxon>Magnoliopsida</taxon>
        <taxon>eudicotyledons</taxon>
        <taxon>Gunneridae</taxon>
        <taxon>Pentapetalae</taxon>
        <taxon>asterids</taxon>
        <taxon>campanulids</taxon>
        <taxon>Apiales</taxon>
        <taxon>Apiaceae</taxon>
        <taxon>Apioideae</taxon>
        <taxon>Scandiceae</taxon>
        <taxon>Daucinae</taxon>
        <taxon>Daucus</taxon>
        <taxon>Daucus sect. Daucus</taxon>
    </lineage>
</organism>
<keyword id="KW-0106">Calcium</keyword>
<keyword id="KW-0903">Direct protein sequencing</keyword>
<keyword id="KW-0349">Heme</keyword>
<keyword id="KW-0376">Hydrogen peroxide</keyword>
<keyword id="KW-0408">Iron</keyword>
<keyword id="KW-0479">Metal-binding</keyword>
<keyword id="KW-0560">Oxidoreductase</keyword>
<keyword id="KW-0575">Peroxidase</keyword>
<comment type="function">
    <text evidence="2">Removal of H(2)O(2), oxidation of toxic reductants, biosynthesis and degradation of lignin, suberization, auxin catabolism, response to environmental stresses such as wounding, pathogen attack and oxidative stress. These functions might be dependent on each isozyme/isoform in each plant tissue.</text>
</comment>
<comment type="catalytic activity">
    <reaction>
        <text>2 a phenolic donor + H2O2 = 2 a phenolic radical donor + 2 H2O</text>
        <dbReference type="Rhea" id="RHEA:56136"/>
        <dbReference type="ChEBI" id="CHEBI:15377"/>
        <dbReference type="ChEBI" id="CHEBI:16240"/>
        <dbReference type="ChEBI" id="CHEBI:139520"/>
        <dbReference type="ChEBI" id="CHEBI:139521"/>
        <dbReference type="EC" id="1.11.1.7"/>
    </reaction>
</comment>
<comment type="cofactor">
    <cofactor evidence="1 2">
        <name>Ca(2+)</name>
        <dbReference type="ChEBI" id="CHEBI:29108"/>
    </cofactor>
    <text evidence="1 2">Binds 2 calcium ions per subunit.</text>
</comment>
<comment type="cofactor">
    <cofactor evidence="1 2">
        <name>heme b</name>
        <dbReference type="ChEBI" id="CHEBI:60344"/>
    </cofactor>
    <text evidence="1 2">Binds 1 heme b (iron(II)-protoporphyrin IX) group per subunit.</text>
</comment>
<comment type="similarity">
    <text evidence="2">Belongs to the peroxidase family. Classical plant (class III) peroxidase subfamily.</text>
</comment>
<dbReference type="EC" id="1.11.1.7"/>
<dbReference type="GO" id="GO:0140825">
    <property type="term" value="F:lactoperoxidase activity"/>
    <property type="evidence" value="ECO:0007669"/>
    <property type="project" value="UniProtKB-EC"/>
</dbReference>
<dbReference type="GO" id="GO:0046872">
    <property type="term" value="F:metal ion binding"/>
    <property type="evidence" value="ECO:0007669"/>
    <property type="project" value="UniProtKB-KW"/>
</dbReference>
<dbReference type="GO" id="GO:0042744">
    <property type="term" value="P:hydrogen peroxide catabolic process"/>
    <property type="evidence" value="ECO:0007669"/>
    <property type="project" value="UniProtKB-KW"/>
</dbReference>
<feature type="chain" id="PRO_0000355595" description="Peroxidase 3">
    <location>
        <begin position="1" status="less than"/>
        <end position="15" status="greater than"/>
    </location>
</feature>
<feature type="unsure residue" description="M or F">
    <location>
        <position position="3"/>
    </location>
</feature>
<feature type="unsure residue" description="L or I">
    <location>
        <position position="4"/>
    </location>
</feature>
<feature type="unsure residue" description="L or I">
    <location>
        <position position="7"/>
    </location>
</feature>
<feature type="unsure residue" description="Q or K">
    <location>
        <position position="11"/>
    </location>
</feature>
<feature type="unsure residue" description="L or I">
    <location>
        <position position="14"/>
    </location>
</feature>
<feature type="non-terminal residue">
    <location>
        <position position="1"/>
    </location>
</feature>
<feature type="non-terminal residue">
    <location>
        <position position="15"/>
    </location>
</feature>
<sequence length="15" mass="1636">CTMLNVLTGTQEGLR</sequence>
<reference evidence="3" key="1">
    <citation type="submission" date="2008-07" db="UniProtKB">
        <authorList>
            <person name="Gomez Ros L.V."/>
            <person name="Almagro L."/>
            <person name="Ros Barcelo A."/>
            <person name="Pedreno M.A."/>
        </authorList>
    </citation>
    <scope>PROTEIN SEQUENCE</scope>
</reference>
<evidence type="ECO:0000250" key="1">
    <source>
        <dbReference type="UniProtKB" id="P84714"/>
    </source>
</evidence>
<evidence type="ECO:0000255" key="2">
    <source>
        <dbReference type="PROSITE-ProRule" id="PRU00297"/>
    </source>
</evidence>
<evidence type="ECO:0000305" key="3"/>
<protein>
    <recommendedName>
        <fullName evidence="1">Peroxidase 3</fullName>
        <ecNumber>1.11.1.7</ecNumber>
    </recommendedName>
</protein>